<dbReference type="EC" id="2.5.1.147" evidence="1"/>
<dbReference type="EMBL" id="AE010299">
    <property type="protein sequence ID" value="AAM04904.1"/>
    <property type="molecule type" value="Genomic_DNA"/>
</dbReference>
<dbReference type="RefSeq" id="WP_011021504.1">
    <property type="nucleotide sequence ID" value="NC_003552.1"/>
</dbReference>
<dbReference type="SMR" id="Q8TQQ0"/>
<dbReference type="FunCoup" id="Q8TQQ0">
    <property type="interactions" value="93"/>
</dbReference>
<dbReference type="STRING" id="188937.MA_1490"/>
<dbReference type="EnsemblBacteria" id="AAM04904">
    <property type="protein sequence ID" value="AAM04904"/>
    <property type="gene ID" value="MA_1490"/>
</dbReference>
<dbReference type="GeneID" id="1473378"/>
<dbReference type="KEGG" id="mac:MA_1490"/>
<dbReference type="HOGENOM" id="CLU_040406_1_0_2"/>
<dbReference type="InParanoid" id="Q8TQQ0"/>
<dbReference type="OrthoDB" id="8186at2157"/>
<dbReference type="PhylomeDB" id="Q8TQQ0"/>
<dbReference type="UniPathway" id="UPA00072"/>
<dbReference type="Proteomes" id="UP000002487">
    <property type="component" value="Chromosome"/>
</dbReference>
<dbReference type="GO" id="GO:0051539">
    <property type="term" value="F:4 iron, 4 sulfur cluster binding"/>
    <property type="evidence" value="ECO:0007669"/>
    <property type="project" value="UniProtKB-KW"/>
</dbReference>
<dbReference type="GO" id="GO:0141093">
    <property type="term" value="F:5-amino-6-(D-ribitylamino)uracil--L-tyrosine 4-hydroxyphenyl transferase activity"/>
    <property type="evidence" value="ECO:0007669"/>
    <property type="project" value="UniProtKB-EC"/>
</dbReference>
<dbReference type="GO" id="GO:0044689">
    <property type="term" value="F:7,8-didemethyl-8-hydroxy-5-deazariboflavin synthase activity"/>
    <property type="evidence" value="ECO:0000318"/>
    <property type="project" value="GO_Central"/>
</dbReference>
<dbReference type="GO" id="GO:0005506">
    <property type="term" value="F:iron ion binding"/>
    <property type="evidence" value="ECO:0007669"/>
    <property type="project" value="UniProtKB-UniRule"/>
</dbReference>
<dbReference type="CDD" id="cd01335">
    <property type="entry name" value="Radical_SAM"/>
    <property type="match status" value="1"/>
</dbReference>
<dbReference type="Gene3D" id="3.20.20.70">
    <property type="entry name" value="Aldolase class I"/>
    <property type="match status" value="1"/>
</dbReference>
<dbReference type="HAMAP" id="MF_01612">
    <property type="entry name" value="FO_synth_sub2"/>
    <property type="match status" value="1"/>
</dbReference>
<dbReference type="InterPro" id="IPR013785">
    <property type="entry name" value="Aldolase_TIM"/>
</dbReference>
<dbReference type="InterPro" id="IPR045567">
    <property type="entry name" value="CofH/MnqC-like_C"/>
</dbReference>
<dbReference type="InterPro" id="IPR019940">
    <property type="entry name" value="CofH_family"/>
</dbReference>
<dbReference type="InterPro" id="IPR006638">
    <property type="entry name" value="Elp3/MiaA/NifB-like_rSAM"/>
</dbReference>
<dbReference type="InterPro" id="IPR034405">
    <property type="entry name" value="F420"/>
</dbReference>
<dbReference type="InterPro" id="IPR020050">
    <property type="entry name" value="FO_synthase_su2"/>
</dbReference>
<dbReference type="InterPro" id="IPR007197">
    <property type="entry name" value="rSAM"/>
</dbReference>
<dbReference type="NCBIfam" id="TIGR00423">
    <property type="entry name" value="CofH family radical SAM protein"/>
    <property type="match status" value="1"/>
</dbReference>
<dbReference type="NCBIfam" id="TIGR03551">
    <property type="entry name" value="F420_cofH"/>
    <property type="match status" value="1"/>
</dbReference>
<dbReference type="NCBIfam" id="NF005609">
    <property type="entry name" value="PRK07360.1"/>
    <property type="match status" value="1"/>
</dbReference>
<dbReference type="PANTHER" id="PTHR43076">
    <property type="entry name" value="FO SYNTHASE (COFH)"/>
    <property type="match status" value="1"/>
</dbReference>
<dbReference type="PANTHER" id="PTHR43076:SF1">
    <property type="entry name" value="LIPOYL SYNTHASE 2"/>
    <property type="match status" value="1"/>
</dbReference>
<dbReference type="Pfam" id="PF19288">
    <property type="entry name" value="CofH_C"/>
    <property type="match status" value="1"/>
</dbReference>
<dbReference type="Pfam" id="PF04055">
    <property type="entry name" value="Radical_SAM"/>
    <property type="match status" value="1"/>
</dbReference>
<dbReference type="PIRSF" id="PIRSF004762">
    <property type="entry name" value="CHP00423"/>
    <property type="match status" value="1"/>
</dbReference>
<dbReference type="SFLD" id="SFLDF00293">
    <property type="entry name" value="((2_3_4_5-tetrahydroxypentyl)a"/>
    <property type="match status" value="1"/>
</dbReference>
<dbReference type="SFLD" id="SFLDF00343">
    <property type="entry name" value="aminofutalosine_synthase_(mqnE"/>
    <property type="match status" value="1"/>
</dbReference>
<dbReference type="SFLD" id="SFLDG01082">
    <property type="entry name" value="B12-binding_domain_containing"/>
    <property type="match status" value="1"/>
</dbReference>
<dbReference type="SFLD" id="SFLDF00342">
    <property type="entry name" value="cyclic_dehypoxanthine_futalosi"/>
    <property type="match status" value="1"/>
</dbReference>
<dbReference type="SFLD" id="SFLDG01389">
    <property type="entry name" value="menaquinone_synthsis_involved"/>
    <property type="match status" value="1"/>
</dbReference>
<dbReference type="SFLD" id="SFLDS00029">
    <property type="entry name" value="Radical_SAM"/>
    <property type="match status" value="1"/>
</dbReference>
<dbReference type="SMART" id="SM00729">
    <property type="entry name" value="Elp3"/>
    <property type="match status" value="1"/>
</dbReference>
<dbReference type="SUPFAM" id="SSF102114">
    <property type="entry name" value="Radical SAM enzymes"/>
    <property type="match status" value="1"/>
</dbReference>
<dbReference type="PROSITE" id="PS51918">
    <property type="entry name" value="RADICAL_SAM"/>
    <property type="match status" value="1"/>
</dbReference>
<evidence type="ECO:0000255" key="1">
    <source>
        <dbReference type="HAMAP-Rule" id="MF_01612"/>
    </source>
</evidence>
<evidence type="ECO:0000255" key="2">
    <source>
        <dbReference type="PROSITE-ProRule" id="PRU01266"/>
    </source>
</evidence>
<protein>
    <recommendedName>
        <fullName evidence="1">5-amino-6-(D-ribitylamino)uracil--L-tyrosine 4-hydroxyphenyl transferase 1</fullName>
        <ecNumber evidence="1">2.5.1.147</ecNumber>
    </recommendedName>
    <alternativeName>
        <fullName evidence="1">FO synthase subunit 2 1</fullName>
    </alternativeName>
</protein>
<keyword id="KW-0004">4Fe-4S</keyword>
<keyword id="KW-0408">Iron</keyword>
<keyword id="KW-0411">Iron-sulfur</keyword>
<keyword id="KW-0479">Metal-binding</keyword>
<keyword id="KW-1185">Reference proteome</keyword>
<keyword id="KW-0949">S-adenosyl-L-methionine</keyword>
<keyword id="KW-0808">Transferase</keyword>
<sequence length="375" mass="41978">MNSKIPEDLMERAYQGKCTKEDALQLLEVPPFELFRFADELRDLAVGDTVTYVVNRNINFTSRCVGTCGFCAFRTNNGKVLSIEEIMEKVRDAEKANATEVCIQGGLLPEVGLDFYQGIAEAIKAEFPEMHIHSFSPMEVYHASRISEIPVKEALRRLKRSGLDTMPGTAAEILSDRVRKIICPSKLKTAEWVEVVRQAHAAGIPTTATMMYGHVETREERIDHMLIIRDIQKETGGITEFVPLPFMPYNNPVGEKMIREGRYATPGLEDLKIYAVSRILFHGHVDNIQASWVKLGKKLAQFSLHCGTNDLGGTLMEESISRSAGACHGEMITVDELEWMIHGAGRIPKERTTLYRRVELASGNLRKISGCGAYE</sequence>
<name>COFH1_METAC</name>
<reference key="1">
    <citation type="journal article" date="2002" name="Genome Res.">
        <title>The genome of Methanosarcina acetivorans reveals extensive metabolic and physiological diversity.</title>
        <authorList>
            <person name="Galagan J.E."/>
            <person name="Nusbaum C."/>
            <person name="Roy A."/>
            <person name="Endrizzi M.G."/>
            <person name="Macdonald P."/>
            <person name="FitzHugh W."/>
            <person name="Calvo S."/>
            <person name="Engels R."/>
            <person name="Smirnov S."/>
            <person name="Atnoor D."/>
            <person name="Brown A."/>
            <person name="Allen N."/>
            <person name="Naylor J."/>
            <person name="Stange-Thomann N."/>
            <person name="DeArellano K."/>
            <person name="Johnson R."/>
            <person name="Linton L."/>
            <person name="McEwan P."/>
            <person name="McKernan K."/>
            <person name="Talamas J."/>
            <person name="Tirrell A."/>
            <person name="Ye W."/>
            <person name="Zimmer A."/>
            <person name="Barber R.D."/>
            <person name="Cann I."/>
            <person name="Graham D.E."/>
            <person name="Grahame D.A."/>
            <person name="Guss A.M."/>
            <person name="Hedderich R."/>
            <person name="Ingram-Smith C."/>
            <person name="Kuettner H.C."/>
            <person name="Krzycki J.A."/>
            <person name="Leigh J.A."/>
            <person name="Li W."/>
            <person name="Liu J."/>
            <person name="Mukhopadhyay B."/>
            <person name="Reeve J.N."/>
            <person name="Smith K."/>
            <person name="Springer T.A."/>
            <person name="Umayam L.A."/>
            <person name="White O."/>
            <person name="White R.H."/>
            <person name="de Macario E.C."/>
            <person name="Ferry J.G."/>
            <person name="Jarrell K.F."/>
            <person name="Jing H."/>
            <person name="Macario A.J.L."/>
            <person name="Paulsen I.T."/>
            <person name="Pritchett M."/>
            <person name="Sowers K.R."/>
            <person name="Swanson R.V."/>
            <person name="Zinder S.H."/>
            <person name="Lander E."/>
            <person name="Metcalf W.W."/>
            <person name="Birren B."/>
        </authorList>
    </citation>
    <scope>NUCLEOTIDE SEQUENCE [LARGE SCALE GENOMIC DNA]</scope>
    <source>
        <strain>ATCC 35395 / DSM 2834 / JCM 12185 / C2A</strain>
    </source>
</reference>
<accession>Q8TQQ0</accession>
<comment type="function">
    <text evidence="1">Catalyzes the radical-mediated synthesis of 5-amino-5-(4-hydroxybenzyl)-6-(D-ribitylimino)-5,6-dihydrouracil from 5-amino-6-(D-ribitylamino)uracil and L-tyrosine.</text>
</comment>
<comment type="catalytic activity">
    <reaction evidence="1">
        <text>5-amino-6-(D-ribitylamino)uracil + L-tyrosine + S-adenosyl-L-methionine = 5-amino-5-(4-hydroxybenzyl)-6-(D-ribitylimino)-5,6-dihydrouracil + 2-iminoacetate + 5'-deoxyadenosine + L-methionine + H(+)</text>
        <dbReference type="Rhea" id="RHEA:55200"/>
        <dbReference type="ChEBI" id="CHEBI:15378"/>
        <dbReference type="ChEBI" id="CHEBI:15934"/>
        <dbReference type="ChEBI" id="CHEBI:17319"/>
        <dbReference type="ChEBI" id="CHEBI:57844"/>
        <dbReference type="ChEBI" id="CHEBI:58315"/>
        <dbReference type="ChEBI" id="CHEBI:59789"/>
        <dbReference type="ChEBI" id="CHEBI:77846"/>
        <dbReference type="ChEBI" id="CHEBI:85936"/>
        <dbReference type="EC" id="2.5.1.147"/>
    </reaction>
</comment>
<comment type="cofactor">
    <cofactor evidence="1">
        <name>[4Fe-4S] cluster</name>
        <dbReference type="ChEBI" id="CHEBI:49883"/>
    </cofactor>
    <text evidence="1">Binds 1 [4Fe-4S] cluster. The cluster is coordinated with 3 cysteines and an exchangeable S-adenosyl-L-methionine.</text>
</comment>
<comment type="pathway">
    <text evidence="1">Cofactor biosynthesis; coenzyme F0 biosynthesis.</text>
</comment>
<comment type="subunit">
    <text evidence="1">Consists of two subunits, CofG and CofH.</text>
</comment>
<comment type="similarity">
    <text evidence="1">Belongs to the radical SAM superfamily. CofH family.</text>
</comment>
<feature type="chain" id="PRO_0000141717" description="5-amino-6-(D-ribitylamino)uracil--L-tyrosine 4-hydroxyphenyl transferase 1">
    <location>
        <begin position="1"/>
        <end position="375"/>
    </location>
</feature>
<feature type="domain" description="Radical SAM core" evidence="2">
    <location>
        <begin position="50"/>
        <end position="284"/>
    </location>
</feature>
<feature type="binding site" evidence="1">
    <location>
        <position position="64"/>
    </location>
    <ligand>
        <name>[4Fe-4S] cluster</name>
        <dbReference type="ChEBI" id="CHEBI:49883"/>
        <note>4Fe-4S-S-AdoMet</note>
    </ligand>
</feature>
<feature type="binding site" evidence="1">
    <location>
        <position position="68"/>
    </location>
    <ligand>
        <name>[4Fe-4S] cluster</name>
        <dbReference type="ChEBI" id="CHEBI:49883"/>
        <note>4Fe-4S-S-AdoMet</note>
    </ligand>
</feature>
<feature type="binding site" evidence="1">
    <location>
        <position position="71"/>
    </location>
    <ligand>
        <name>[4Fe-4S] cluster</name>
        <dbReference type="ChEBI" id="CHEBI:49883"/>
        <note>4Fe-4S-S-AdoMet</note>
    </ligand>
</feature>
<organism>
    <name type="scientific">Methanosarcina acetivorans (strain ATCC 35395 / DSM 2834 / JCM 12185 / C2A)</name>
    <dbReference type="NCBI Taxonomy" id="188937"/>
    <lineage>
        <taxon>Archaea</taxon>
        <taxon>Methanobacteriati</taxon>
        <taxon>Methanobacteriota</taxon>
        <taxon>Stenosarchaea group</taxon>
        <taxon>Methanomicrobia</taxon>
        <taxon>Methanosarcinales</taxon>
        <taxon>Methanosarcinaceae</taxon>
        <taxon>Methanosarcina</taxon>
    </lineage>
</organism>
<gene>
    <name evidence="1" type="primary">cofH1</name>
    <name type="ordered locus">MA_1490</name>
</gene>
<proteinExistence type="inferred from homology"/>